<proteinExistence type="evidence at protein level"/>
<evidence type="ECO:0000250" key="1"/>
<evidence type="ECO:0000305" key="2"/>
<keyword id="KW-0202">Cytokine</keyword>
<keyword id="KW-0903">Direct protein sequencing</keyword>
<keyword id="KW-1015">Disulfide bond</keyword>
<keyword id="KW-0339">Growth factor</keyword>
<keyword id="KW-0395">Inflammatory response</keyword>
<keyword id="KW-1185">Reference proteome</keyword>
<keyword id="KW-0964">Secreted</keyword>
<comment type="function">
    <text evidence="1">Has chemotactic activity for neutrophils.</text>
</comment>
<comment type="subunit">
    <text evidence="2">Homodimer.</text>
</comment>
<comment type="subcellular location">
    <subcellularLocation>
        <location>Secreted</location>
    </subcellularLocation>
</comment>
<comment type="induction">
    <text>Generated during an inflammatory reaction.</text>
</comment>
<comment type="similarity">
    <text evidence="2">Belongs to the intercrine alpha (chemokine CxC) family.</text>
</comment>
<reference key="1">
    <citation type="journal article" date="1994" name="Gene">
        <title>Cloning of two rabbit GRO homologues and their expression in alveolar macrophages.</title>
        <authorList>
            <person name="Johnson M.C."/>
            <person name="Goodman R.B. II"/>
            <person name="Kajikawa O."/>
            <person name="Wong V.A."/>
            <person name="Mongovin S.M."/>
            <person name="Martin T.R."/>
        </authorList>
    </citation>
    <scope>NUCLEOTIDE SEQUENCE [MRNA]</scope>
    <source>
        <strain>New Zealand white</strain>
        <tissue>Alveolar macrophage</tissue>
    </source>
</reference>
<reference key="2">
    <citation type="journal article" date="1991" name="Biochem. J.">
        <title>Identification of a second neutrophil-chemoattractant cytokine generated during an inflammatory reaction in the rabbit peritoneal cavity in vivo. Purification, partial amino acid sequence and structural relationship to melanoma-growth-stimulatory activity.</title>
        <authorList>
            <person name="Jose P.J."/>
            <person name="Collins P.D."/>
            <person name="Perkins J.A."/>
            <person name="Beaubien B.C."/>
            <person name="Totty N.F."/>
            <person name="Waterfield M.D."/>
            <person name="Hsuan J."/>
            <person name="Williams T.J."/>
        </authorList>
    </citation>
    <scope>PROTEIN SEQUENCE OF 1-36</scope>
    <source>
        <strain>New Zealand white</strain>
        <tissue>Peritoneal cavity</tissue>
    </source>
</reference>
<organism>
    <name type="scientific">Oryctolagus cuniculus</name>
    <name type="common">Rabbit</name>
    <dbReference type="NCBI Taxonomy" id="9986"/>
    <lineage>
        <taxon>Eukaryota</taxon>
        <taxon>Metazoa</taxon>
        <taxon>Chordata</taxon>
        <taxon>Craniata</taxon>
        <taxon>Vertebrata</taxon>
        <taxon>Euteleostomi</taxon>
        <taxon>Mammalia</taxon>
        <taxon>Eutheria</taxon>
        <taxon>Euarchontoglires</taxon>
        <taxon>Glires</taxon>
        <taxon>Lagomorpha</taxon>
        <taxon>Leporidae</taxon>
        <taxon>Oryctolagus</taxon>
    </lineage>
</organism>
<feature type="chain" id="PRO_0000144296" description="Permeability factor 2">
    <location>
        <begin position="1"/>
        <end position="71" status="greater than"/>
    </location>
</feature>
<feature type="disulfide bond" evidence="1">
    <location>
        <begin position="7"/>
        <end position="33"/>
    </location>
</feature>
<feature type="disulfide bond" evidence="1">
    <location>
        <begin position="9"/>
        <end position="49"/>
    </location>
</feature>
<feature type="sequence conflict" description="In Ref. 2; AA sequence." evidence="2" ref="2">
    <original>N</original>
    <variation>S</variation>
    <location>
        <position position="20"/>
    </location>
</feature>
<feature type="sequence conflict" description="In Ref. 2; AA sequence." evidence="2" ref="2">
    <original>N</original>
    <variation>S</variation>
    <location>
        <position position="23"/>
    </location>
</feature>
<feature type="non-terminal residue">
    <location>
        <position position="71"/>
    </location>
</feature>
<sequence length="71" mass="7713">ALTELRCQCLQTVQGIHLKNIQNLKVLSPGPHCAQTEVIATLKSGQEACRNPAAPMVKKFLQKRLSNGNSS</sequence>
<accession>P30782</accession>
<dbReference type="EMBL" id="L19157">
    <property type="protein sequence ID" value="AAA64357.1"/>
    <property type="molecule type" value="mRNA"/>
</dbReference>
<dbReference type="SMR" id="P30782"/>
<dbReference type="STRING" id="9986.ENSOCUP00000029422"/>
<dbReference type="PaxDb" id="9986-ENSOCUP00000024741"/>
<dbReference type="eggNOG" id="ENOG502S7MM">
    <property type="taxonomic scope" value="Eukaryota"/>
</dbReference>
<dbReference type="InParanoid" id="P30782"/>
<dbReference type="Proteomes" id="UP000001811">
    <property type="component" value="Unplaced"/>
</dbReference>
<dbReference type="GO" id="GO:0005615">
    <property type="term" value="C:extracellular space"/>
    <property type="evidence" value="ECO:0007669"/>
    <property type="project" value="UniProtKB-KW"/>
</dbReference>
<dbReference type="GO" id="GO:0008009">
    <property type="term" value="F:chemokine activity"/>
    <property type="evidence" value="ECO:0007669"/>
    <property type="project" value="InterPro"/>
</dbReference>
<dbReference type="GO" id="GO:0008083">
    <property type="term" value="F:growth factor activity"/>
    <property type="evidence" value="ECO:0007669"/>
    <property type="project" value="UniProtKB-KW"/>
</dbReference>
<dbReference type="GO" id="GO:0006955">
    <property type="term" value="P:immune response"/>
    <property type="evidence" value="ECO:0007669"/>
    <property type="project" value="InterPro"/>
</dbReference>
<dbReference type="GO" id="GO:0006954">
    <property type="term" value="P:inflammatory response"/>
    <property type="evidence" value="ECO:0007669"/>
    <property type="project" value="UniProtKB-KW"/>
</dbReference>
<dbReference type="CDD" id="cd00273">
    <property type="entry name" value="Chemokine_CXC"/>
    <property type="match status" value="1"/>
</dbReference>
<dbReference type="FunFam" id="2.40.50.40:FF:000004">
    <property type="entry name" value="C-X-C motif chemokine"/>
    <property type="match status" value="1"/>
</dbReference>
<dbReference type="Gene3D" id="2.40.50.40">
    <property type="match status" value="1"/>
</dbReference>
<dbReference type="InterPro" id="IPR039809">
    <property type="entry name" value="Chemokine_b/g/d"/>
</dbReference>
<dbReference type="InterPro" id="IPR001089">
    <property type="entry name" value="Chemokine_CXC"/>
</dbReference>
<dbReference type="InterPro" id="IPR001811">
    <property type="entry name" value="Chemokine_IL8-like_dom"/>
</dbReference>
<dbReference type="InterPro" id="IPR033899">
    <property type="entry name" value="CXC_Chemokine_domain"/>
</dbReference>
<dbReference type="InterPro" id="IPR036048">
    <property type="entry name" value="Interleukin_8-like_sf"/>
</dbReference>
<dbReference type="PANTHER" id="PTHR12015:SF192">
    <property type="entry name" value="GROWTH-REGULATED ALPHA PROTEIN"/>
    <property type="match status" value="1"/>
</dbReference>
<dbReference type="PANTHER" id="PTHR12015">
    <property type="entry name" value="SMALL INDUCIBLE CYTOKINE A"/>
    <property type="match status" value="1"/>
</dbReference>
<dbReference type="Pfam" id="PF00048">
    <property type="entry name" value="IL8"/>
    <property type="match status" value="1"/>
</dbReference>
<dbReference type="PRINTS" id="PR00436">
    <property type="entry name" value="INTERLEUKIN8"/>
</dbReference>
<dbReference type="PRINTS" id="PR00437">
    <property type="entry name" value="SMALLCYTKCXC"/>
</dbReference>
<dbReference type="SMART" id="SM00199">
    <property type="entry name" value="SCY"/>
    <property type="match status" value="1"/>
</dbReference>
<dbReference type="SUPFAM" id="SSF54117">
    <property type="entry name" value="Interleukin 8-like chemokines"/>
    <property type="match status" value="1"/>
</dbReference>
<name>GRO1_RABIT</name>
<protein>
    <recommendedName>
        <fullName>Permeability factor 2</fullName>
    </recommendedName>
    <alternativeName>
        <fullName>RPF2</fullName>
    </alternativeName>
</protein>